<reference key="1">
    <citation type="submission" date="2005-09" db="EMBL/GenBank/DDBJ databases">
        <title>Annotation of the Aspergillus terreus NIH2624 genome.</title>
        <authorList>
            <person name="Birren B.W."/>
            <person name="Lander E.S."/>
            <person name="Galagan J.E."/>
            <person name="Nusbaum C."/>
            <person name="Devon K."/>
            <person name="Henn M."/>
            <person name="Ma L.-J."/>
            <person name="Jaffe D.B."/>
            <person name="Butler J."/>
            <person name="Alvarez P."/>
            <person name="Gnerre S."/>
            <person name="Grabherr M."/>
            <person name="Kleber M."/>
            <person name="Mauceli E.W."/>
            <person name="Brockman W."/>
            <person name="Rounsley S."/>
            <person name="Young S.K."/>
            <person name="LaButti K."/>
            <person name="Pushparaj V."/>
            <person name="DeCaprio D."/>
            <person name="Crawford M."/>
            <person name="Koehrsen M."/>
            <person name="Engels R."/>
            <person name="Montgomery P."/>
            <person name="Pearson M."/>
            <person name="Howarth C."/>
            <person name="Larson L."/>
            <person name="Luoma S."/>
            <person name="White J."/>
            <person name="Alvarado L."/>
            <person name="Kodira C.D."/>
            <person name="Zeng Q."/>
            <person name="Oleary S."/>
            <person name="Yandava C."/>
            <person name="Denning D.W."/>
            <person name="Nierman W.C."/>
            <person name="Milne T."/>
            <person name="Madden K."/>
        </authorList>
    </citation>
    <scope>NUCLEOTIDE SEQUENCE [LARGE SCALE GENOMIC DNA]</scope>
    <source>
        <strain>NIH 2624 / FGSC A1156</strain>
    </source>
</reference>
<reference key="2">
    <citation type="journal article" date="1980" name="Proc. Natl. Acad. Sci. U.S.A.">
        <title>Mevinolin: a highly potent competitive inhibitor of hydroxymethylglutaryl-coenzyme A reductase and a cholesterol-lowering agent.</title>
        <authorList>
            <person name="Alberts A.W."/>
            <person name="Chen J."/>
            <person name="Kuron G."/>
            <person name="Hunt V."/>
            <person name="Huff J."/>
            <person name="Hoffman C."/>
            <person name="Rothrock J."/>
            <person name="Lopez M."/>
            <person name="Joshua H."/>
            <person name="Harris E."/>
            <person name="Patchett A."/>
            <person name="Monaghan R."/>
            <person name="Currie S."/>
            <person name="Stapley E."/>
            <person name="Albers-Schonberg G."/>
            <person name="Hensens O."/>
            <person name="Hirshfield J."/>
            <person name="Hoogsteen K."/>
            <person name="Liesch J."/>
            <person name="Springer J."/>
        </authorList>
    </citation>
    <scope>BIOTECHNOLOGY</scope>
</reference>
<reference key="3">
    <citation type="journal article" date="1999" name="Chem. Biol.">
        <title>Lovastatin biosynthesis in Aspergillus terreus: characterization of blocked mutants, enzyme activities and a multifunctional polyketide synthase gene.</title>
        <authorList>
            <person name="Hendrickson L."/>
            <person name="Davis C.R."/>
            <person name="Roach C."/>
            <person name="Nguyen D.K."/>
            <person name="Aldrich T."/>
            <person name="McAda P.C."/>
            <person name="Reeves C.D."/>
        </authorList>
    </citation>
    <scope>FUNCTION</scope>
</reference>
<reference key="4">
    <citation type="journal article" date="1999" name="Science">
        <title>Modulation of polyketide synthase activity by accessory proteins during lovastatin biosynthesis.</title>
        <authorList>
            <person name="Kennedy J."/>
            <person name="Auclair K."/>
            <person name="Kendrew S.G."/>
            <person name="Park C."/>
            <person name="Vederas J.C."/>
            <person name="Hutchinson C.R."/>
        </authorList>
    </citation>
    <scope>IDENTIFICATION</scope>
    <scope>PATHWAY</scope>
</reference>
<reference key="5">
    <citation type="journal article" date="2003" name="Org. Biomol. Chem.">
        <title>Transformations of cyclic nonaketides by Aspergillus terreus mutants blocked for lovastatin biosynthesis at the lovA and lovC genes.</title>
        <authorList>
            <person name="Sorensen J.L."/>
            <person name="Auclair K."/>
            <person name="Kennedy J."/>
            <person name="Hutchinson C.R."/>
            <person name="Vederas J.C."/>
        </authorList>
    </citation>
    <scope>FUNCTION</scope>
    <scope>PATHWAY</scope>
    <scope>DISRUPTION PHENOTYPE</scope>
</reference>
<reference key="6">
    <citation type="journal article" date="2006" name="Chem. Biol.">
        <title>Biosynthesis of lovastatin analogs with a broadly specific acyltransferase.</title>
        <authorList>
            <person name="Xie X."/>
            <person name="Watanabe K."/>
            <person name="Wojcicki W.A."/>
            <person name="Wang C.C."/>
            <person name="Tang Y."/>
        </authorList>
    </citation>
    <scope>FUNCTION</scope>
</reference>
<reference key="7">
    <citation type="journal article" date="2009" name="Biotechnol. Bioeng.">
        <title>Rational improvement of simvastatin synthase solubility in Escherichia coli leads to higher whole-cell biocatalytic activity.</title>
        <authorList>
            <person name="Xie X."/>
            <person name="Pashkov I."/>
            <person name="Gao X."/>
            <person name="Guerrero J.L."/>
            <person name="Yeates T.O."/>
            <person name="Tang Y."/>
        </authorList>
    </citation>
    <scope>FUNCTION</scope>
</reference>
<reference key="8">
    <citation type="journal article" date="2009" name="Chem. Biol.">
        <title>Directed evolution and structural characterization of a simvastatin synthase.</title>
        <authorList>
            <person name="Gao X."/>
            <person name="Xie X."/>
            <person name="Pashkov I."/>
            <person name="Sawaya M.R."/>
            <person name="Laidman J."/>
            <person name="Zhang W."/>
            <person name="Cacho R."/>
            <person name="Yeates T.O."/>
            <person name="Tang Y."/>
        </authorList>
    </citation>
    <scope>FUNCTION</scope>
</reference>
<reference key="9">
    <citation type="journal article" date="2009" name="J. Am. Chem. Soc.">
        <title>Acyltransferase mediated polyketide release from a fungal megasynthase.</title>
        <authorList>
            <person name="Xie X."/>
            <person name="Meehan M.J."/>
            <person name="Xu W."/>
            <person name="Dorrestein P.C."/>
            <person name="Tang Y."/>
        </authorList>
    </citation>
    <scope>FUNCTION</scope>
</reference>
<reference key="10">
    <citation type="journal article" date="2009" name="Science">
        <title>Complete reconstitution of a highly reducing iterative polyketide synthase.</title>
        <authorList>
            <person name="Ma S.M."/>
            <person name="Li J.W."/>
            <person name="Choi J.W."/>
            <person name="Zhou H."/>
            <person name="Lee K.K."/>
            <person name="Moorthie V.A."/>
            <person name="Xie X."/>
            <person name="Kealey J.T."/>
            <person name="Da Silva N.A."/>
            <person name="Vederas J.C."/>
            <person name="Tang Y."/>
        </authorList>
    </citation>
    <scope>FUNCTION</scope>
</reference>
<reference key="11">
    <citation type="journal article" date="2011" name="Biochemistry">
        <title>FT-ICR-MS characterization of intermediates in the biosynthesis of the alpha-methylbutyrate side chain of lovastatin by the 277 kDa polyketide synthase LovF.</title>
        <authorList>
            <person name="Meehan M.J."/>
            <person name="Xie X."/>
            <person name="Zhao X."/>
            <person name="Xu W."/>
            <person name="Tang Y."/>
            <person name="Dorrestein P.C."/>
        </authorList>
    </citation>
    <scope>FUNCTION</scope>
</reference>
<reference key="12">
    <citation type="journal article" date="2011" name="J. Am. Chem. Soc.">
        <title>Double oxidation of the cyclic nonaketide dihydromonacolin L to monacolin J by a single cytochrome P450 monooxygenase, LovA.</title>
        <authorList>
            <person name="Barriuso J."/>
            <person name="Nguyen D.T."/>
            <person name="Li J.W."/>
            <person name="Roberts J.N."/>
            <person name="MacNevin G."/>
            <person name="Chaytor J.L."/>
            <person name="Marcus S.L."/>
            <person name="Vederas J.C."/>
            <person name="Ro D.K."/>
        </authorList>
    </citation>
    <scope>FUNCTION</scope>
    <scope>CATALYTIC ACTIVITY</scope>
    <scope>SUBCELLULAR LOCATION</scope>
    <scope>BIOPHYSICOCHEMICAL PROPERTIES</scope>
</reference>
<reference key="13">
    <citation type="journal article" date="2012" name="Proc. Natl. Acad. Sci. U.S.A.">
        <title>Crystal structure and biochemical studies of the trans-acting polyketide enoyl reductase LovC from lovastatin biosynthesis.</title>
        <authorList>
            <person name="Ames B.D."/>
            <person name="Nguyen C."/>
            <person name="Bruegger J."/>
            <person name="Smith P."/>
            <person name="Xu W."/>
            <person name="Ma S."/>
            <person name="Wong E."/>
            <person name="Wong S."/>
            <person name="Xie X."/>
            <person name="Li J.W."/>
            <person name="Vederas J.C."/>
            <person name="Tang Y."/>
            <person name="Tsai S.C."/>
        </authorList>
    </citation>
    <scope>FUNCTION</scope>
</reference>
<reference key="14">
    <citation type="journal article" date="2013" name="Angew. Chem. Int. Ed. Engl.">
        <title>LovG: the thioesterase required for dihydromonacolin L release and lovastatin nonaketide synthase turnover in lovastatin biosynthesis.</title>
        <authorList>
            <person name="Xu W."/>
            <person name="Chooi Y.H."/>
            <person name="Choi J.W."/>
            <person name="Li S."/>
            <person name="Vederas J.C."/>
            <person name="Da Silva N.A."/>
            <person name="Tang Y."/>
        </authorList>
    </citation>
    <scope>FUNCTION</scope>
</reference>
<reference key="15">
    <citation type="journal article" date="2014" name="Nat. Chem. Biol.">
        <title>The role of distant mutations and allosteric regulation on LovD active site dynamics.</title>
        <authorList>
            <person name="Jimenez-Oses G."/>
            <person name="Osuna S."/>
            <person name="Gao X."/>
            <person name="Sawaya M.R."/>
            <person name="Gilson L."/>
            <person name="Collier S.J."/>
            <person name="Huisman G.W."/>
            <person name="Yeates T.O."/>
            <person name="Tang Y."/>
            <person name="Houk K.N."/>
        </authorList>
    </citation>
    <scope>FUNCTION</scope>
</reference>
<reference key="16">
    <citation type="journal article" date="2017" name="Int. J. Mol. Sci.">
        <title>Simvastatin inhibits cell proliferation and migration in human anaplastic thyroid cancer.</title>
        <authorList>
            <person name="Chen M.C."/>
            <person name="Tsai Y.C."/>
            <person name="Tseng J.H."/>
            <person name="Liou J.J."/>
            <person name="Horng S."/>
            <person name="Wen H.C."/>
            <person name="Fan Y.C."/>
            <person name="Zhong W.B."/>
            <person name="Hsu S.P."/>
        </authorList>
    </citation>
    <scope>BIOTECHNOLOGY</scope>
</reference>
<reference key="17">
    <citation type="journal article" date="2018" name="Int. J. Mol. Sci.">
        <title>A synergistic anti-cancer effect of troglitazone and lovastatin in a human anaplastic thyroid cancer cell line and in a mouse xenograft model.</title>
        <authorList>
            <person name="Zhong W.B."/>
            <person name="Tsai Y.C."/>
            <person name="Chin L.H."/>
            <person name="Tseng J.H."/>
            <person name="Tang L.W."/>
            <person name="Horng S."/>
            <person name="Fan Y.C."/>
            <person name="Hsu S.P."/>
        </authorList>
    </citation>
    <scope>BIOTECHNOLOGY</scope>
</reference>
<reference key="18">
    <citation type="journal article" date="2025" name="Microbiol. Res.">
        <title>Development of a landing pad system for Aspergillus niger and its application in the overproduction of monacolin J.</title>
        <authorList>
            <person name="Yao L."/>
            <person name="Zheng J."/>
            <person name="Wang B."/>
            <person name="Pan L."/>
        </authorList>
    </citation>
    <scope>FUNCTION</scope>
    <scope>PATHWAY</scope>
</reference>
<name>LOVA_ASPTN</name>
<evidence type="ECO:0000250" key="1">
    <source>
        <dbReference type="UniProtKB" id="P04798"/>
    </source>
</evidence>
<evidence type="ECO:0000255" key="2"/>
<evidence type="ECO:0000255" key="3">
    <source>
        <dbReference type="PROSITE-ProRule" id="PRU00498"/>
    </source>
</evidence>
<evidence type="ECO:0000269" key="4">
    <source>
    </source>
</evidence>
<evidence type="ECO:0000269" key="5">
    <source>
    </source>
</evidence>
<evidence type="ECO:0000269" key="6">
    <source>
    </source>
</evidence>
<evidence type="ECO:0000269" key="7">
    <source>
    </source>
</evidence>
<evidence type="ECO:0000269" key="8">
    <source>
    </source>
</evidence>
<evidence type="ECO:0000269" key="9">
    <source>
    </source>
</evidence>
<evidence type="ECO:0000269" key="10">
    <source>
    </source>
</evidence>
<evidence type="ECO:0000269" key="11">
    <source>
    </source>
</evidence>
<evidence type="ECO:0000269" key="12">
    <source>
    </source>
</evidence>
<evidence type="ECO:0000269" key="13">
    <source>
    </source>
</evidence>
<evidence type="ECO:0000269" key="14">
    <source>
    </source>
</evidence>
<evidence type="ECO:0000269" key="15">
    <source>
    </source>
</evidence>
<evidence type="ECO:0000269" key="16">
    <source>
    </source>
</evidence>
<evidence type="ECO:0000269" key="17">
    <source>
    </source>
</evidence>
<evidence type="ECO:0000269" key="18">
    <source>
    </source>
</evidence>
<evidence type="ECO:0000269" key="19">
    <source>
    </source>
</evidence>
<evidence type="ECO:0000269" key="20">
    <source>
    </source>
</evidence>
<evidence type="ECO:0000303" key="21">
    <source>
    </source>
</evidence>
<evidence type="ECO:0000305" key="22"/>
<evidence type="ECO:0000305" key="23">
    <source>
    </source>
</evidence>
<dbReference type="EC" id="1.14.14.124" evidence="13"/>
<dbReference type="EC" id="1.14.14.125" evidence="13"/>
<dbReference type="EMBL" id="CH476609">
    <property type="protein sequence ID" value="EAU29409.1"/>
    <property type="molecule type" value="Genomic_DNA"/>
</dbReference>
<dbReference type="RefSeq" id="XP_001209262.1">
    <property type="nucleotide sequence ID" value="XM_001209262.1"/>
</dbReference>
<dbReference type="SMR" id="Q0C8M4"/>
<dbReference type="STRING" id="341663.Q0C8M4"/>
<dbReference type="GlyCosmos" id="Q0C8M4">
    <property type="glycosylation" value="1 site, No reported glycans"/>
</dbReference>
<dbReference type="EnsemblFungi" id="EAU29409">
    <property type="protein sequence ID" value="EAU29409"/>
    <property type="gene ID" value="ATEG_09960"/>
</dbReference>
<dbReference type="GeneID" id="4319545"/>
<dbReference type="VEuPathDB" id="FungiDB:ATEG_09960"/>
<dbReference type="eggNOG" id="KOG0157">
    <property type="taxonomic scope" value="Eukaryota"/>
</dbReference>
<dbReference type="HOGENOM" id="CLU_022195_0_3_1"/>
<dbReference type="OMA" id="EPEYNDC"/>
<dbReference type="OrthoDB" id="1844152at2759"/>
<dbReference type="UniPathway" id="UPA00875"/>
<dbReference type="Proteomes" id="UP000007963">
    <property type="component" value="Unassembled WGS sequence"/>
</dbReference>
<dbReference type="GO" id="GO:0005789">
    <property type="term" value="C:endoplasmic reticulum membrane"/>
    <property type="evidence" value="ECO:0007669"/>
    <property type="project" value="UniProtKB-SubCell"/>
</dbReference>
<dbReference type="GO" id="GO:0020037">
    <property type="term" value="F:heme binding"/>
    <property type="evidence" value="ECO:0007669"/>
    <property type="project" value="InterPro"/>
</dbReference>
<dbReference type="GO" id="GO:0005506">
    <property type="term" value="F:iron ion binding"/>
    <property type="evidence" value="ECO:0007669"/>
    <property type="project" value="InterPro"/>
</dbReference>
<dbReference type="GO" id="GO:0004497">
    <property type="term" value="F:monooxygenase activity"/>
    <property type="evidence" value="ECO:0007669"/>
    <property type="project" value="UniProtKB-KW"/>
</dbReference>
<dbReference type="GO" id="GO:0016705">
    <property type="term" value="F:oxidoreductase activity, acting on paired donors, with incorporation or reduction of molecular oxygen"/>
    <property type="evidence" value="ECO:0007669"/>
    <property type="project" value="InterPro"/>
</dbReference>
<dbReference type="GO" id="GO:0140735">
    <property type="term" value="P:lovastatin biosynthetic process"/>
    <property type="evidence" value="ECO:0000314"/>
    <property type="project" value="GO_Central"/>
</dbReference>
<dbReference type="CDD" id="cd11041">
    <property type="entry name" value="CYP503A1-like"/>
    <property type="match status" value="1"/>
</dbReference>
<dbReference type="FunFam" id="1.10.630.10:FF:000059">
    <property type="entry name" value="Cytochrome P450 monooxygenase"/>
    <property type="match status" value="1"/>
</dbReference>
<dbReference type="Gene3D" id="1.10.630.10">
    <property type="entry name" value="Cytochrome P450"/>
    <property type="match status" value="1"/>
</dbReference>
<dbReference type="InterPro" id="IPR001128">
    <property type="entry name" value="Cyt_P450"/>
</dbReference>
<dbReference type="InterPro" id="IPR002401">
    <property type="entry name" value="Cyt_P450_E_grp-I"/>
</dbReference>
<dbReference type="InterPro" id="IPR036396">
    <property type="entry name" value="Cyt_P450_sf"/>
</dbReference>
<dbReference type="PANTHER" id="PTHR46206">
    <property type="entry name" value="CYTOCHROME P450"/>
    <property type="match status" value="1"/>
</dbReference>
<dbReference type="PANTHER" id="PTHR46206:SF2">
    <property type="entry name" value="CYTOCHROME P450 MONOOXYGENASE AUSG-RELATED"/>
    <property type="match status" value="1"/>
</dbReference>
<dbReference type="Pfam" id="PF00067">
    <property type="entry name" value="p450"/>
    <property type="match status" value="1"/>
</dbReference>
<dbReference type="PRINTS" id="PR00463">
    <property type="entry name" value="EP450I"/>
</dbReference>
<dbReference type="SUPFAM" id="SSF48264">
    <property type="entry name" value="Cytochrome P450"/>
    <property type="match status" value="1"/>
</dbReference>
<gene>
    <name evidence="21" type="primary">lovA</name>
    <name type="ORF">ATEG_09960</name>
</gene>
<proteinExistence type="evidence at protein level"/>
<protein>
    <recommendedName>
        <fullName evidence="21">Dihydromonacolin L monooxygenase LovA</fullName>
        <ecNumber evidence="13">1.14.14.124</ecNumber>
        <ecNumber evidence="13">1.14.14.125</ecNumber>
    </recommendedName>
    <alternativeName>
        <fullName evidence="21">Dihydromonacolin L hydroxylase</fullName>
    </alternativeName>
    <alternativeName>
        <fullName evidence="21">Lovastatin biosynthesis cluster protein A</fullName>
    </alternativeName>
    <alternativeName>
        <fullName evidence="21">Monacolin L hydroxylase</fullName>
    </alternativeName>
</protein>
<organism>
    <name type="scientific">Aspergillus terreus (strain NIH 2624 / FGSC A1156)</name>
    <dbReference type="NCBI Taxonomy" id="341663"/>
    <lineage>
        <taxon>Eukaryota</taxon>
        <taxon>Fungi</taxon>
        <taxon>Dikarya</taxon>
        <taxon>Ascomycota</taxon>
        <taxon>Pezizomycotina</taxon>
        <taxon>Eurotiomycetes</taxon>
        <taxon>Eurotiomycetidae</taxon>
        <taxon>Eurotiales</taxon>
        <taxon>Aspergillaceae</taxon>
        <taxon>Aspergillus</taxon>
        <taxon>Aspergillus subgen. Circumdati</taxon>
    </lineage>
</organism>
<accession>Q0C8M4</accession>
<feature type="chain" id="PRO_0000430274" description="Dihydromonacolin L monooxygenase LovA">
    <location>
        <begin position="1"/>
        <end position="528"/>
    </location>
</feature>
<feature type="topological domain" description="Cytoplasmic" evidence="2">
    <location>
        <begin position="1"/>
        <end position="23"/>
    </location>
</feature>
<feature type="transmembrane region" description="Helical; Signal-anchor for type II membrane protein" evidence="2">
    <location>
        <begin position="24"/>
        <end position="44"/>
    </location>
</feature>
<feature type="topological domain" description="Lumenal" evidence="2">
    <location>
        <begin position="45"/>
        <end position="528"/>
    </location>
</feature>
<feature type="binding site" description="axial binding residue" evidence="1">
    <location>
        <position position="465"/>
    </location>
    <ligand>
        <name>heme</name>
        <dbReference type="ChEBI" id="CHEBI:30413"/>
    </ligand>
    <ligandPart>
        <name>Fe</name>
        <dbReference type="ChEBI" id="CHEBI:18248"/>
    </ligandPart>
</feature>
<feature type="glycosylation site" description="N-linked (GlcNAc...) asparagine" evidence="3">
    <location>
        <position position="399"/>
    </location>
</feature>
<keyword id="KW-0256">Endoplasmic reticulum</keyword>
<keyword id="KW-0325">Glycoprotein</keyword>
<keyword id="KW-0349">Heme</keyword>
<keyword id="KW-0408">Iron</keyword>
<keyword id="KW-0472">Membrane</keyword>
<keyword id="KW-0479">Metal-binding</keyword>
<keyword id="KW-0503">Monooxygenase</keyword>
<keyword id="KW-0560">Oxidoreductase</keyword>
<keyword id="KW-1185">Reference proteome</keyword>
<keyword id="KW-0735">Signal-anchor</keyword>
<keyword id="KW-0812">Transmembrane</keyword>
<keyword id="KW-1133">Transmembrane helix</keyword>
<comment type="function">
    <text evidence="4 5 6 7 8 9 10 11 12 13 14 15 16 19">Dihydromonacolin L monooxygenase; part of the gene cluster that mediates the biosynthesis of lovastatin (also known as mevinolin, mevacor or monacolin K), a hypolipidemic inhibitor of (3S)-hydroxymethylglutaryl-coenzyme A (HMG-CoA) reductase (HMGR) (PubMed:10334994, PubMed:12929390, PubMed:21495633, PubMed:39515266). The first step in the biosynthesis of lovastatin is the production of dihydromonacolin L acid by the lovastatin nonaketide synthase lovB and the trans-acting enoyl reductase lovC via condensation of one acetyl-CoA unit and 8 malonyl-CoA units (PubMed:10334994, PubMed:10381407, PubMed:19900898, PubMed:22733743). Dihydromonacolin L acid is released from lovB by the thioesterase lovG (PubMed:23653178). Next, dihydromonacolin L acid is oxidized by the dihydromonacolin L monooxygenase lovA twice to form monacolin J acid (PubMed:12929390, PubMed:21495633). The 2-methylbutyrate moiety of lovastatin is synthesized by the lovastatin diketide synthase lovF via condensation of one acetyl-CoA unit and one malonyl-CoA unit (PubMed:19530726, PubMed:21069965). Finally, the covalent attachment of this moiety to monacolin J acid is catalyzed by the transesterase lovD to yield lovastatin (PubMed:10334994, PubMed:17113998, PubMed:18988191, PubMed:19875080, PubMed:24727900). LovD has broad substrate specificity and can also convert monacolin J to simvastatin using alpha-dimethylbutanoyl-S-methyl-3-mercaptopropionate (DMB-S-MMP) as the thioester acyl donor, and can also catalyze the reverse reaction and function as hydrolase in vitro (PubMed:19875080). LovD has much higher activity with LovF-bound 2-methylbutanoate than with free diketide substrates (PubMed:21069965).</text>
</comment>
<comment type="catalytic activity">
    <reaction evidence="13">
        <text>dihydromonacolin L carboxylate + reduced [NADPH--hemoprotein reductase] + O2 = monacolin L carboxylate + oxidized [NADPH--hemoprotein reductase] + 2 H2O + H(+)</text>
        <dbReference type="Rhea" id="RHEA:42368"/>
        <dbReference type="Rhea" id="RHEA-COMP:11964"/>
        <dbReference type="Rhea" id="RHEA-COMP:11965"/>
        <dbReference type="ChEBI" id="CHEBI:15377"/>
        <dbReference type="ChEBI" id="CHEBI:15378"/>
        <dbReference type="ChEBI" id="CHEBI:15379"/>
        <dbReference type="ChEBI" id="CHEBI:57618"/>
        <dbReference type="ChEBI" id="CHEBI:58210"/>
        <dbReference type="ChEBI" id="CHEBI:79031"/>
        <dbReference type="ChEBI" id="CHEBI:79044"/>
        <dbReference type="EC" id="1.14.14.124"/>
    </reaction>
    <physiologicalReaction direction="left-to-right" evidence="13">
        <dbReference type="Rhea" id="RHEA:42369"/>
    </physiologicalReaction>
</comment>
<comment type="catalytic activity">
    <reaction evidence="13">
        <text>monacolin L carboxylate + reduced [NADPH--hemoprotein reductase] + O2 = monacolin J carboxylate + oxidized [NADPH--hemoprotein reductase] + H2O + H(+)</text>
        <dbReference type="Rhea" id="RHEA:29599"/>
        <dbReference type="Rhea" id="RHEA-COMP:11964"/>
        <dbReference type="Rhea" id="RHEA-COMP:11965"/>
        <dbReference type="ChEBI" id="CHEBI:15377"/>
        <dbReference type="ChEBI" id="CHEBI:15378"/>
        <dbReference type="ChEBI" id="CHEBI:15379"/>
        <dbReference type="ChEBI" id="CHEBI:57618"/>
        <dbReference type="ChEBI" id="CHEBI:58210"/>
        <dbReference type="ChEBI" id="CHEBI:79035"/>
        <dbReference type="ChEBI" id="CHEBI:79044"/>
        <dbReference type="EC" id="1.14.14.125"/>
    </reaction>
    <physiologicalReaction direction="left-to-right" evidence="13">
        <dbReference type="Rhea" id="RHEA:29600"/>
    </physiologicalReaction>
</comment>
<comment type="cofactor">
    <cofactor evidence="1">
        <name>heme</name>
        <dbReference type="ChEBI" id="CHEBI:30413"/>
    </cofactor>
    <text evidence="1">Binds 1 heme group per subunit.</text>
</comment>
<comment type="biophysicochemical properties">
    <kinetics>
        <KM evidence="13">6.2 uM for monacolin L acid</KM>
    </kinetics>
</comment>
<comment type="pathway">
    <text evidence="4 6 19">Polyketide biosynthesis; lovastatin biosynthesis.</text>
</comment>
<comment type="subcellular location">
    <subcellularLocation>
        <location evidence="23">Membrane</location>
        <topology evidence="23">Single-pass membrane protein</topology>
    </subcellularLocation>
    <subcellularLocation>
        <location evidence="23">Endoplasmic reticulum membrane</location>
        <topology evidence="23">Single-pass type II membrane protein</topology>
    </subcellularLocation>
</comment>
<comment type="disruption phenotype">
    <text evidence="6">Loss of lovastatin biosynthesis. Accelerates degradation of lovastatin precursors.</text>
</comment>
<comment type="biotechnology">
    <text evidence="17 18 20">Lovastatin acts as a hypolipidemic agent that works as inhibitor of (3S)-hydroxymethylglutaryl-coenzyme A (HMG-CoA) reductase (HMGR) which reduces HMG-CoA to mevalonate and is the key step in cholesterol biosynthesis (PubMed:6933445). Lovastatin, simvastatin and related compounds are widely used to treat hypercholesteremia and reduce the risk of cardiovascular disease (PubMed:6933445). Furthermore, statins such as lovastatin were found to be anticancer agents (PubMed:29236027, PubMed:29932104).</text>
</comment>
<comment type="similarity">
    <text evidence="22">Belongs to the cytochrome P450 family.</text>
</comment>
<sequence length="528" mass="60579">MTVDALTQPHHLLSLAWNDTQQHGSWFAPLVTTSAGLLCLLLYLCSSGRRSELPVFNPKTWWELTTMRAKRDFDANAPSWIESWFSQNDKPIRFIVDSGYCTILPSSMADEFRKMKELCMYKFLGTDFHSHLPGFDGFKEVTRDAHLITKVVMNQFQTQAPKYVKPLANEASGIITDIFGDSNEWHTVPVYNQCLDLVTRTVTFIMVGSKLAHNEEWLDIAKHHAVTMAIQARQLRLWPVILRPLVHWLEPQGAKLRAQVRRARQLLDPIIQERRAERDSCLAKGIEPPRYVDSIQWFEDTAKGKWYDAAGAQLAMDFAGIYGTSDLLIGGLVDIVRHPHLLEPLRDEIRTVIGQGGWTPASLYKLKLLDSCLKESQRVKPVECATMRSYALQDVTFSNGTFIPKGELVAVAADRMSNPEVWPEPAKYDPYRYMRLREDPAKAFSAQLENTNGDHIGFGWHPRACPGRFFASKEIKMMLAYLLIRYDWKVVPNEPLQYYRHSFSVRIHPTTKLMMRRRDEDIRLPGSL</sequence>